<organism>
    <name type="scientific">Cupriavidus taiwanensis (strain DSM 17343 / BCRC 17206 / CCUG 44338 / CIP 107171 / LMG 19424 / R1)</name>
    <name type="common">Ralstonia taiwanensis (strain LMG 19424)</name>
    <dbReference type="NCBI Taxonomy" id="977880"/>
    <lineage>
        <taxon>Bacteria</taxon>
        <taxon>Pseudomonadati</taxon>
        <taxon>Pseudomonadota</taxon>
        <taxon>Betaproteobacteria</taxon>
        <taxon>Burkholderiales</taxon>
        <taxon>Burkholderiaceae</taxon>
        <taxon>Cupriavidus</taxon>
    </lineage>
</organism>
<comment type="function">
    <text evidence="1">DNA-dependent RNA polymerase catalyzes the transcription of DNA into RNA using the four ribonucleoside triphosphates as substrates.</text>
</comment>
<comment type="catalytic activity">
    <reaction evidence="1">
        <text>RNA(n) + a ribonucleoside 5'-triphosphate = RNA(n+1) + diphosphate</text>
        <dbReference type="Rhea" id="RHEA:21248"/>
        <dbReference type="Rhea" id="RHEA-COMP:14527"/>
        <dbReference type="Rhea" id="RHEA-COMP:17342"/>
        <dbReference type="ChEBI" id="CHEBI:33019"/>
        <dbReference type="ChEBI" id="CHEBI:61557"/>
        <dbReference type="ChEBI" id="CHEBI:140395"/>
        <dbReference type="EC" id="2.7.7.6"/>
    </reaction>
</comment>
<comment type="subunit">
    <text evidence="1">The RNAP catalytic core consists of 2 alpha, 1 beta, 1 beta' and 1 omega subunit. When a sigma factor is associated with the core the holoenzyme is formed, which can initiate transcription.</text>
</comment>
<comment type="similarity">
    <text evidence="1">Belongs to the RNA polymerase beta chain family.</text>
</comment>
<reference key="1">
    <citation type="journal article" date="2008" name="Genome Res.">
        <title>Genome sequence of the beta-rhizobium Cupriavidus taiwanensis and comparative genomics of rhizobia.</title>
        <authorList>
            <person name="Amadou C."/>
            <person name="Pascal G."/>
            <person name="Mangenot S."/>
            <person name="Glew M."/>
            <person name="Bontemps C."/>
            <person name="Capela D."/>
            <person name="Carrere S."/>
            <person name="Cruveiller S."/>
            <person name="Dossat C."/>
            <person name="Lajus A."/>
            <person name="Marchetti M."/>
            <person name="Poinsot V."/>
            <person name="Rouy Z."/>
            <person name="Servin B."/>
            <person name="Saad M."/>
            <person name="Schenowitz C."/>
            <person name="Barbe V."/>
            <person name="Batut J."/>
            <person name="Medigue C."/>
            <person name="Masson-Boivin C."/>
        </authorList>
    </citation>
    <scope>NUCLEOTIDE SEQUENCE [LARGE SCALE GENOMIC DNA]</scope>
    <source>
        <strain>DSM 17343 / BCRC 17206 / CCUG 44338 / CIP 107171 / LMG 19424 / R1</strain>
    </source>
</reference>
<protein>
    <recommendedName>
        <fullName evidence="1">DNA-directed RNA polymerase subunit beta</fullName>
        <shortName evidence="1">RNAP subunit beta</shortName>
        <ecNumber evidence="1">2.7.7.6</ecNumber>
    </recommendedName>
    <alternativeName>
        <fullName evidence="1">RNA polymerase subunit beta</fullName>
    </alternativeName>
    <alternativeName>
        <fullName evidence="1">Transcriptase subunit beta</fullName>
    </alternativeName>
</protein>
<accession>B3R7T6</accession>
<keyword id="KW-0240">DNA-directed RNA polymerase</keyword>
<keyword id="KW-0548">Nucleotidyltransferase</keyword>
<keyword id="KW-0804">Transcription</keyword>
<keyword id="KW-0808">Transferase</keyword>
<evidence type="ECO:0000255" key="1">
    <source>
        <dbReference type="HAMAP-Rule" id="MF_01321"/>
    </source>
</evidence>
<proteinExistence type="inferred from homology"/>
<feature type="chain" id="PRO_1000141682" description="DNA-directed RNA polymerase subunit beta">
    <location>
        <begin position="1"/>
        <end position="1368"/>
    </location>
</feature>
<name>RPOB_CUPTR</name>
<sequence length="1368" mass="152632">MAYSFTEKKRIRKSFAKRATVHQVPFLLATQIESYTQFLQADTPPARRKTEGLQAAFNAIFPISSHNGLARMEFVSYHLSNPPFDVKECQQRGLTFHSALRAKVRLIINDRENPGKVKEVKEQEVYMGEIPLMTSTGSFVINGTERVIVSQLHRSPGVFFEHDKGKTHSSGKLLFSARIIPYRGSWLDFEFDPKDILYFRVDRRRKMPVTILLKSIGLTPEQILAHFFVFDNFTLQSEGAQLEFVPERLRGEVARFDIADKNGRVVVEKDKRINAKHIRDLDSAGTKLISVPEDYLLGRVLAKNIIDPDTGEVIANANDELTEALLENLREAGVKQIQTLYTNDLDQGPYMSQTLRVDETADQTAARIAIYRMMRPGEPPTEEAVEALFQRLFYSEESYDLSRVGRMKVNSRLGRPSGEGAMVLQDEDILETIKILVNLRNGKGEVDDIDHLGNRRVRCVGELAENQFRAGLSRVERAVKERLGQAETENLMPHDLINSKPISSAIREFFGSSQLSQFMDQTNPLSEITHKRRVSALGPGGLTRERAGFEVRDVHPTHYGRVCPIETPEGPNIGLINSLALYARLNEYGFLETPYRKVVDSKLTDEVDYLSAIEEGKYVVAQANATVDADGNLTDELVSAREGSERETRMVTPDRVQYIDVAPSQIVSAAASLVPFLEHDDANRALMGANMQRQAVPCLRPDKPLVGTGIERTVAVDSGTAVQAMRGGVVDYVDAMRIVIRVNDDEAVAGEVGVDIYNLIKYTRSNQNTNINQRPMVKVGDHVARGDVIADGASTDLGELALGQNMLVAFMPWNGYNFEDSILISERVVAEDRYTSIHIEELSVVARDTKLGPEEITRDISNLAEAQLARLDESGITYIGAEVEAGDVLVGKVTPKGETQLTPEEKLLRAIFGEKASDVKDTSLRVPSGMSGIVIDVQVFTREGVTRDKRAQSIIDDELKRYRLDLNDQLRIVEGDAFQRLERLLVDKTVNGGPKKLAKGAKITKEYLADIDKYHWFDIRPADEELAAQLEAVKEAIEQKRHEFDLAFEEKRKKLTQGDELPPGVIKMVKVYLAVKRRLQPGDKMAGRHGNKGVVSKIVPIEDMPYMADGTPADIVLNPLGVPSRMNVGQILETHLGWAARGLGQRIGDMLKAQAKAQELRTLLSQIYNESGKPEDLDSLSDAEVLELANNLKKGVPFATPVFDGAHEDEIRRMLDLAYPDDVAREKGLTASKQQVTLFDGRTGEAFERPVTLGVMHMLKLHHLVDDKMHARSTGPYSLVTQQPLGGKAQFGGQRFGEMEVWALEAYGASYVLQEMLTVKSDDVNGRTKVYENIVKGEHSIDAGMPESFNVLVKEIRSLGIDIDLDRY</sequence>
<gene>
    <name evidence="1" type="primary">rpoB</name>
    <name type="ordered locus">RALTA_A2958</name>
</gene>
<dbReference type="EC" id="2.7.7.6" evidence="1"/>
<dbReference type="EMBL" id="CU633749">
    <property type="protein sequence ID" value="CAQ70881.1"/>
    <property type="molecule type" value="Genomic_DNA"/>
</dbReference>
<dbReference type="RefSeq" id="WP_012354150.1">
    <property type="nucleotide sequence ID" value="NC_010528.1"/>
</dbReference>
<dbReference type="SMR" id="B3R7T6"/>
<dbReference type="GeneID" id="29761700"/>
<dbReference type="KEGG" id="cti:RALTA_A2958"/>
<dbReference type="eggNOG" id="COG0085">
    <property type="taxonomic scope" value="Bacteria"/>
</dbReference>
<dbReference type="HOGENOM" id="CLU_000524_4_0_4"/>
<dbReference type="BioCyc" id="CTAI977880:RALTA_RS14420-MONOMER"/>
<dbReference type="Proteomes" id="UP000001692">
    <property type="component" value="Chromosome 1"/>
</dbReference>
<dbReference type="GO" id="GO:0000428">
    <property type="term" value="C:DNA-directed RNA polymerase complex"/>
    <property type="evidence" value="ECO:0007669"/>
    <property type="project" value="UniProtKB-KW"/>
</dbReference>
<dbReference type="GO" id="GO:0003677">
    <property type="term" value="F:DNA binding"/>
    <property type="evidence" value="ECO:0007669"/>
    <property type="project" value="UniProtKB-UniRule"/>
</dbReference>
<dbReference type="GO" id="GO:0003899">
    <property type="term" value="F:DNA-directed RNA polymerase activity"/>
    <property type="evidence" value="ECO:0007669"/>
    <property type="project" value="UniProtKB-UniRule"/>
</dbReference>
<dbReference type="GO" id="GO:0032549">
    <property type="term" value="F:ribonucleoside binding"/>
    <property type="evidence" value="ECO:0007669"/>
    <property type="project" value="InterPro"/>
</dbReference>
<dbReference type="GO" id="GO:0006351">
    <property type="term" value="P:DNA-templated transcription"/>
    <property type="evidence" value="ECO:0007669"/>
    <property type="project" value="UniProtKB-UniRule"/>
</dbReference>
<dbReference type="CDD" id="cd00653">
    <property type="entry name" value="RNA_pol_B_RPB2"/>
    <property type="match status" value="1"/>
</dbReference>
<dbReference type="FunFam" id="2.40.50.100:FF:000006">
    <property type="entry name" value="DNA-directed RNA polymerase subunit beta"/>
    <property type="match status" value="1"/>
</dbReference>
<dbReference type="FunFam" id="2.40.50.150:FF:000001">
    <property type="entry name" value="DNA-directed RNA polymerase subunit beta"/>
    <property type="match status" value="1"/>
</dbReference>
<dbReference type="FunFam" id="3.90.1800.10:FF:000001">
    <property type="entry name" value="DNA-directed RNA polymerase subunit beta"/>
    <property type="match status" value="1"/>
</dbReference>
<dbReference type="Gene3D" id="2.40.50.100">
    <property type="match status" value="1"/>
</dbReference>
<dbReference type="Gene3D" id="2.40.50.150">
    <property type="match status" value="1"/>
</dbReference>
<dbReference type="Gene3D" id="3.90.1100.10">
    <property type="match status" value="2"/>
</dbReference>
<dbReference type="Gene3D" id="6.10.140.1670">
    <property type="match status" value="1"/>
</dbReference>
<dbReference type="Gene3D" id="2.30.150.10">
    <property type="entry name" value="DNA-directed RNA polymerase, beta subunit, external 1 domain"/>
    <property type="match status" value="1"/>
</dbReference>
<dbReference type="Gene3D" id="2.40.270.10">
    <property type="entry name" value="DNA-directed RNA polymerase, subunit 2, domain 6"/>
    <property type="match status" value="1"/>
</dbReference>
<dbReference type="Gene3D" id="3.90.1800.10">
    <property type="entry name" value="RNA polymerase alpha subunit dimerisation domain"/>
    <property type="match status" value="1"/>
</dbReference>
<dbReference type="Gene3D" id="3.90.1110.10">
    <property type="entry name" value="RNA polymerase Rpb2, domain 2"/>
    <property type="match status" value="1"/>
</dbReference>
<dbReference type="HAMAP" id="MF_01321">
    <property type="entry name" value="RNApol_bact_RpoB"/>
    <property type="match status" value="1"/>
</dbReference>
<dbReference type="InterPro" id="IPR042107">
    <property type="entry name" value="DNA-dir_RNA_pol_bsu_ext_1_sf"/>
</dbReference>
<dbReference type="InterPro" id="IPR019462">
    <property type="entry name" value="DNA-dir_RNA_pol_bsu_external_1"/>
</dbReference>
<dbReference type="InterPro" id="IPR015712">
    <property type="entry name" value="DNA-dir_RNA_pol_su2"/>
</dbReference>
<dbReference type="InterPro" id="IPR007120">
    <property type="entry name" value="DNA-dir_RNAP_su2_dom"/>
</dbReference>
<dbReference type="InterPro" id="IPR037033">
    <property type="entry name" value="DNA-dir_RNAP_su2_hyb_sf"/>
</dbReference>
<dbReference type="InterPro" id="IPR010243">
    <property type="entry name" value="RNA_pol_bsu_bac"/>
</dbReference>
<dbReference type="InterPro" id="IPR007121">
    <property type="entry name" value="RNA_pol_bsu_CS"/>
</dbReference>
<dbReference type="InterPro" id="IPR007644">
    <property type="entry name" value="RNA_pol_bsu_protrusion"/>
</dbReference>
<dbReference type="InterPro" id="IPR007642">
    <property type="entry name" value="RNA_pol_Rpb2_2"/>
</dbReference>
<dbReference type="InterPro" id="IPR037034">
    <property type="entry name" value="RNA_pol_Rpb2_2_sf"/>
</dbReference>
<dbReference type="InterPro" id="IPR007645">
    <property type="entry name" value="RNA_pol_Rpb2_3"/>
</dbReference>
<dbReference type="InterPro" id="IPR007641">
    <property type="entry name" value="RNA_pol_Rpb2_7"/>
</dbReference>
<dbReference type="InterPro" id="IPR014724">
    <property type="entry name" value="RNA_pol_RPB2_OB-fold"/>
</dbReference>
<dbReference type="NCBIfam" id="NF001616">
    <property type="entry name" value="PRK00405.1"/>
    <property type="match status" value="1"/>
</dbReference>
<dbReference type="NCBIfam" id="TIGR02013">
    <property type="entry name" value="rpoB"/>
    <property type="match status" value="1"/>
</dbReference>
<dbReference type="PANTHER" id="PTHR20856">
    <property type="entry name" value="DNA-DIRECTED RNA POLYMERASE I SUBUNIT 2"/>
    <property type="match status" value="1"/>
</dbReference>
<dbReference type="Pfam" id="PF04563">
    <property type="entry name" value="RNA_pol_Rpb2_1"/>
    <property type="match status" value="1"/>
</dbReference>
<dbReference type="Pfam" id="PF04561">
    <property type="entry name" value="RNA_pol_Rpb2_2"/>
    <property type="match status" value="2"/>
</dbReference>
<dbReference type="Pfam" id="PF04565">
    <property type="entry name" value="RNA_pol_Rpb2_3"/>
    <property type="match status" value="1"/>
</dbReference>
<dbReference type="Pfam" id="PF10385">
    <property type="entry name" value="RNA_pol_Rpb2_45"/>
    <property type="match status" value="1"/>
</dbReference>
<dbReference type="Pfam" id="PF00562">
    <property type="entry name" value="RNA_pol_Rpb2_6"/>
    <property type="match status" value="1"/>
</dbReference>
<dbReference type="Pfam" id="PF04560">
    <property type="entry name" value="RNA_pol_Rpb2_7"/>
    <property type="match status" value="1"/>
</dbReference>
<dbReference type="SUPFAM" id="SSF64484">
    <property type="entry name" value="beta and beta-prime subunits of DNA dependent RNA-polymerase"/>
    <property type="match status" value="1"/>
</dbReference>
<dbReference type="PROSITE" id="PS01166">
    <property type="entry name" value="RNA_POL_BETA"/>
    <property type="match status" value="1"/>
</dbReference>